<organism>
    <name type="scientific">Ginkgo biloba</name>
    <name type="common">Ginkgo</name>
    <name type="synonym">Maidenhair tree</name>
    <dbReference type="NCBI Taxonomy" id="3311"/>
    <lineage>
        <taxon>Eukaryota</taxon>
        <taxon>Viridiplantae</taxon>
        <taxon>Streptophyta</taxon>
        <taxon>Embryophyta</taxon>
        <taxon>Tracheophyta</taxon>
        <taxon>Spermatophyta</taxon>
        <taxon>Ginkgoidae</taxon>
        <taxon>Ginkgoales</taxon>
        <taxon>Ginkgoaceae</taxon>
        <taxon>Ginkgo</taxon>
    </lineage>
</organism>
<accession>P36207</accession>
<keyword id="KW-0150">Chloroplast</keyword>
<keyword id="KW-0934">Plastid</keyword>
<keyword id="KW-0687">Ribonucleoprotein</keyword>
<keyword id="KW-0689">Ribosomal protein</keyword>
<sequence>MVKLRLKRCGRK</sequence>
<name>RR16_GINBI</name>
<comment type="subcellular location">
    <subcellularLocation>
        <location>Plastid</location>
        <location>Chloroplast</location>
    </subcellularLocation>
</comment>
<comment type="similarity">
    <text evidence="1">Belongs to the bacterial ribosomal protein bS16 family.</text>
</comment>
<gene>
    <name type="primary">rps16</name>
</gene>
<reference key="1">
    <citation type="journal article" date="1994" name="Curr. Genet.">
        <title>Chloroplastic genomes of Ginkgo biloba and Chlamydomonas moewusii contain a chlB gene encoding one subunit of a light-independent protochlorophyllide reductase.</title>
        <authorList>
            <person name="Richard M."/>
            <person name="Tremblay C."/>
            <person name="Bellemare G."/>
        </authorList>
    </citation>
    <scope>NUCLEOTIDE SEQUENCE [GENOMIC DNA]</scope>
</reference>
<evidence type="ECO:0000305" key="1"/>
<geneLocation type="chloroplast"/>
<protein>
    <recommendedName>
        <fullName evidence="1">Small ribosomal subunit protein bS16c</fullName>
    </recommendedName>
    <alternativeName>
        <fullName>30S ribosomal protein S16, chloroplastic</fullName>
    </alternativeName>
</protein>
<proteinExistence type="inferred from homology"/>
<feature type="chain" id="PRO_0000167300" description="Small ribosomal subunit protein bS16c">
    <location>
        <begin position="1"/>
        <end position="12" status="greater than"/>
    </location>
</feature>
<feature type="non-terminal residue">
    <location>
        <position position="12"/>
    </location>
</feature>
<dbReference type="EMBL" id="U01531">
    <property type="protein sequence ID" value="AAA66977.1"/>
    <property type="molecule type" value="Genomic_DNA"/>
</dbReference>
<dbReference type="GO" id="GO:0009507">
    <property type="term" value="C:chloroplast"/>
    <property type="evidence" value="ECO:0007669"/>
    <property type="project" value="UniProtKB-SubCell"/>
</dbReference>
<dbReference type="GO" id="GO:1990904">
    <property type="term" value="C:ribonucleoprotein complex"/>
    <property type="evidence" value="ECO:0007669"/>
    <property type="project" value="UniProtKB-KW"/>
</dbReference>
<dbReference type="GO" id="GO:0005840">
    <property type="term" value="C:ribosome"/>
    <property type="evidence" value="ECO:0007669"/>
    <property type="project" value="UniProtKB-KW"/>
</dbReference>
<dbReference type="GO" id="GO:0003735">
    <property type="term" value="F:structural constituent of ribosome"/>
    <property type="evidence" value="ECO:0007669"/>
    <property type="project" value="InterPro"/>
</dbReference>
<dbReference type="GO" id="GO:0006412">
    <property type="term" value="P:translation"/>
    <property type="evidence" value="ECO:0007669"/>
    <property type="project" value="InterPro"/>
</dbReference>
<dbReference type="InterPro" id="IPR020592">
    <property type="entry name" value="Ribosomal_bS16_CS"/>
</dbReference>
<dbReference type="PROSITE" id="PS00732">
    <property type="entry name" value="RIBOSOMAL_S16"/>
    <property type="match status" value="1"/>
</dbReference>